<geneLocation type="chloroplast"/>
<dbReference type="EMBL" id="AY916449">
    <property type="protein sequence ID" value="AAW82510.1"/>
    <property type="molecule type" value="Genomic_DNA"/>
</dbReference>
<dbReference type="RefSeq" id="YP_358586.1">
    <property type="nucleotide sequence ID" value="NC_007499.1"/>
</dbReference>
<dbReference type="SMR" id="Q3BAN2"/>
<dbReference type="GO" id="GO:0009535">
    <property type="term" value="C:chloroplast thylakoid membrane"/>
    <property type="evidence" value="ECO:0007669"/>
    <property type="project" value="UniProtKB-SubCell"/>
</dbReference>
<dbReference type="GO" id="GO:0009522">
    <property type="term" value="C:photosystem I"/>
    <property type="evidence" value="ECO:0007669"/>
    <property type="project" value="UniProtKB-KW"/>
</dbReference>
<dbReference type="GO" id="GO:0015979">
    <property type="term" value="P:photosynthesis"/>
    <property type="evidence" value="ECO:0007669"/>
    <property type="project" value="UniProtKB-UniRule"/>
</dbReference>
<dbReference type="HAMAP" id="MF_00431">
    <property type="entry name" value="PSI_PsaI"/>
    <property type="match status" value="1"/>
</dbReference>
<dbReference type="InterPro" id="IPR001302">
    <property type="entry name" value="PSI_PsaI"/>
</dbReference>
<dbReference type="InterPro" id="IPR036357">
    <property type="entry name" value="PSI_PsaI_sf"/>
</dbReference>
<dbReference type="NCBIfam" id="TIGR03052">
    <property type="entry name" value="PS_I_psaI"/>
    <property type="match status" value="1"/>
</dbReference>
<dbReference type="PANTHER" id="PTHR35775">
    <property type="match status" value="1"/>
</dbReference>
<dbReference type="PANTHER" id="PTHR35775:SF2">
    <property type="entry name" value="PHOTOSYSTEM I REACTION CENTER SUBUNIT VIII"/>
    <property type="match status" value="1"/>
</dbReference>
<dbReference type="Pfam" id="PF00796">
    <property type="entry name" value="PSI_8"/>
    <property type="match status" value="1"/>
</dbReference>
<dbReference type="SUPFAM" id="SSF81540">
    <property type="entry name" value="Subunit VIII of photosystem I reaction centre, PsaI"/>
    <property type="match status" value="1"/>
</dbReference>
<accession>Q3BAN2</accession>
<organism>
    <name type="scientific">Phalaenopsis aphrodite subsp. formosana</name>
    <name type="common">Moth orchid</name>
    <dbReference type="NCBI Taxonomy" id="308872"/>
    <lineage>
        <taxon>Eukaryota</taxon>
        <taxon>Viridiplantae</taxon>
        <taxon>Streptophyta</taxon>
        <taxon>Embryophyta</taxon>
        <taxon>Tracheophyta</taxon>
        <taxon>Spermatophyta</taxon>
        <taxon>Magnoliopsida</taxon>
        <taxon>Liliopsida</taxon>
        <taxon>Asparagales</taxon>
        <taxon>Orchidaceae</taxon>
        <taxon>Epidendroideae</taxon>
        <taxon>Vandeae</taxon>
        <taxon>Aeridinae</taxon>
        <taxon>Phalaenopsis</taxon>
    </lineage>
</organism>
<keyword id="KW-0150">Chloroplast</keyword>
<keyword id="KW-0472">Membrane</keyword>
<keyword id="KW-0602">Photosynthesis</keyword>
<keyword id="KW-0603">Photosystem I</keyword>
<keyword id="KW-0934">Plastid</keyword>
<keyword id="KW-0793">Thylakoid</keyword>
<keyword id="KW-0812">Transmembrane</keyword>
<keyword id="KW-1133">Transmembrane helix</keyword>
<protein>
    <recommendedName>
        <fullName evidence="1">Photosystem I reaction center subunit VIII</fullName>
        <shortName evidence="1">PSI-I</shortName>
    </recommendedName>
</protein>
<comment type="function">
    <text evidence="1">May help in the organization of the PsaL subunit.</text>
</comment>
<comment type="subcellular location">
    <subcellularLocation>
        <location evidence="1">Plastid</location>
        <location evidence="1">Chloroplast thylakoid membrane</location>
        <topology evidence="1">Single-pass membrane protein</topology>
    </subcellularLocation>
</comment>
<comment type="similarity">
    <text evidence="1">Belongs to the PsaI family.</text>
</comment>
<name>PSAI_PHAAO</name>
<evidence type="ECO:0000255" key="1">
    <source>
        <dbReference type="HAMAP-Rule" id="MF_00431"/>
    </source>
</evidence>
<gene>
    <name evidence="1" type="primary">psaI</name>
</gene>
<reference key="1">
    <citation type="journal article" date="2006" name="Mol. Biol. Evol.">
        <title>The chloroplast genome of Phalaenopsis aphrodite (Orchidaceae): comparative analysis of evolutionary rate with that of grasses and its phylogenetic implications.</title>
        <authorList>
            <person name="Chang C.-C."/>
            <person name="Lin H.-C."/>
            <person name="Lin I.-P."/>
            <person name="Chow T.-Y."/>
            <person name="Chen H.-H."/>
            <person name="Chen W.-H."/>
            <person name="Cheng C.-H."/>
            <person name="Lin C.-Y."/>
            <person name="Liu S.-M."/>
            <person name="Chang C.-C."/>
            <person name="Chaw S.-M."/>
        </authorList>
    </citation>
    <scope>NUCLEOTIDE SEQUENCE [LARGE SCALE GENOMIC DNA]</scope>
    <source>
        <strain>cv. Taisugar TS-97</strain>
    </source>
</reference>
<sequence>MIDLNFPSIFVPLVGLVFPAIAMASLSLYVQRNKIV</sequence>
<proteinExistence type="inferred from homology"/>
<feature type="chain" id="PRO_0000276033" description="Photosystem I reaction center subunit VIII">
    <location>
        <begin position="1"/>
        <end position="36"/>
    </location>
</feature>
<feature type="transmembrane region" description="Helical" evidence="1">
    <location>
        <begin position="9"/>
        <end position="29"/>
    </location>
</feature>